<reference key="1">
    <citation type="journal article" date="1999" name="Nature">
        <title>Genomic sequence comparison of two unrelated isolates of the human gastric pathogen Helicobacter pylori.</title>
        <authorList>
            <person name="Alm R.A."/>
            <person name="Ling L.-S.L."/>
            <person name="Moir D.T."/>
            <person name="King B.L."/>
            <person name="Brown E.D."/>
            <person name="Doig P.C."/>
            <person name="Smith D.R."/>
            <person name="Noonan B."/>
            <person name="Guild B.C."/>
            <person name="deJonge B.L."/>
            <person name="Carmel G."/>
            <person name="Tummino P.J."/>
            <person name="Caruso A."/>
            <person name="Uria-Nickelsen M."/>
            <person name="Mills D.M."/>
            <person name="Ives C."/>
            <person name="Gibson R."/>
            <person name="Merberg D."/>
            <person name="Mills S.D."/>
            <person name="Jiang Q."/>
            <person name="Taylor D.E."/>
            <person name="Vovis G.F."/>
            <person name="Trust T.J."/>
        </authorList>
    </citation>
    <scope>NUCLEOTIDE SEQUENCE [LARGE SCALE GENOMIC DNA]</scope>
    <source>
        <strain>J99 / ATCC 700824</strain>
    </source>
</reference>
<name>PPK1_HELPJ</name>
<organism>
    <name type="scientific">Helicobacter pylori (strain J99 / ATCC 700824)</name>
    <name type="common">Campylobacter pylori J99</name>
    <dbReference type="NCBI Taxonomy" id="85963"/>
    <lineage>
        <taxon>Bacteria</taxon>
        <taxon>Pseudomonadati</taxon>
        <taxon>Campylobacterota</taxon>
        <taxon>Epsilonproteobacteria</taxon>
        <taxon>Campylobacterales</taxon>
        <taxon>Helicobacteraceae</taxon>
        <taxon>Helicobacter</taxon>
    </lineage>
</organism>
<gene>
    <name evidence="1" type="primary">ppk</name>
    <name type="ordered locus">jhp_0413</name>
</gene>
<sequence length="675" mass="77850">MNRFFNRELSWLAFNTRVLNEAKDESLPLLERLKFLAIYDTNLDEFYMIRVAGLKQLYEHKIASKGIDGASPEEQLEKIKHYLAHEIEERELEFQKIQALLFKKGLCITPYNELNLEQKAKAKTYFKEQLYALVLPFKLDSSHTFPPLANLTFALFAHIKDKETQSASYALIKLPSFIFRFVELEKGLFALAEEIVEAHLEELFLEHEILDCMAFRVTCDADIAITEDEAHDYADLMSKSLRKRNQGEIVRLQTQKGSQELLKTLLASLRSFQTHSYKKHKLTGMHIYKSAIMLNLGDLWELVNHSDFKALKSPNFTPKIHPHFNENDLFKSIEKQDLLLFHPYESFEPVIDLIEQAASDPTTLSIKMTLYRVGKHSPIVKALIEAASKIQVSVLVELKARFDEESNLHWAKALERAGALVVYGVFKLKVHAKMLVITKKTDNQLRHFTHLSTGNYNPLSAKIYTDVSFFSAKNEIANDIIKLFHSLLTSSATSNTLETLFMAPKQIKPKIIELIQNEMNHKQEGYIILKANALVDSEIIEWLYQASQKGVKIDLIIRGICCLKPQVKGLSENIRVYSIVGKYLEHARIYYFKHENIYFSSADLMPRNLERRVELLIPATNPKIANKLLHILEIQLKDTLKRYELNSKGRYAKISNPNDPLNSQDYFEKQALKTL</sequence>
<proteinExistence type="inferred from homology"/>
<feature type="chain" id="PRO_0000128644" description="Polyphosphate kinase">
    <location>
        <begin position="1"/>
        <end position="675"/>
    </location>
</feature>
<feature type="active site" description="Phosphohistidine intermediate" evidence="1">
    <location>
        <position position="431"/>
    </location>
</feature>
<feature type="binding site" evidence="1">
    <location>
        <position position="42"/>
    </location>
    <ligand>
        <name>ATP</name>
        <dbReference type="ChEBI" id="CHEBI:30616"/>
    </ligand>
</feature>
<feature type="binding site" evidence="1">
    <location>
        <position position="372"/>
    </location>
    <ligand>
        <name>Mg(2+)</name>
        <dbReference type="ChEBI" id="CHEBI:18420"/>
    </ligand>
</feature>
<feature type="binding site" evidence="1">
    <location>
        <position position="401"/>
    </location>
    <ligand>
        <name>Mg(2+)</name>
        <dbReference type="ChEBI" id="CHEBI:18420"/>
    </ligand>
</feature>
<feature type="binding site" evidence="1">
    <location>
        <position position="464"/>
    </location>
    <ligand>
        <name>ATP</name>
        <dbReference type="ChEBI" id="CHEBI:30616"/>
    </ligand>
</feature>
<feature type="binding site" evidence="1">
    <location>
        <position position="558"/>
    </location>
    <ligand>
        <name>ATP</name>
        <dbReference type="ChEBI" id="CHEBI:30616"/>
    </ligand>
</feature>
<feature type="binding site" evidence="1">
    <location>
        <position position="586"/>
    </location>
    <ligand>
        <name>ATP</name>
        <dbReference type="ChEBI" id="CHEBI:30616"/>
    </ligand>
</feature>
<evidence type="ECO:0000255" key="1">
    <source>
        <dbReference type="HAMAP-Rule" id="MF_00347"/>
    </source>
</evidence>
<comment type="function">
    <text evidence="1">Catalyzes the reversible transfer of the terminal phosphate of ATP to form a long-chain polyphosphate (polyP).</text>
</comment>
<comment type="catalytic activity">
    <reaction evidence="1">
        <text>[phosphate](n) + ATP = [phosphate](n+1) + ADP</text>
        <dbReference type="Rhea" id="RHEA:19573"/>
        <dbReference type="Rhea" id="RHEA-COMP:9859"/>
        <dbReference type="Rhea" id="RHEA-COMP:14280"/>
        <dbReference type="ChEBI" id="CHEBI:16838"/>
        <dbReference type="ChEBI" id="CHEBI:30616"/>
        <dbReference type="ChEBI" id="CHEBI:456216"/>
        <dbReference type="EC" id="2.7.4.1"/>
    </reaction>
</comment>
<comment type="cofactor">
    <cofactor evidence="1">
        <name>Mg(2+)</name>
        <dbReference type="ChEBI" id="CHEBI:18420"/>
    </cofactor>
</comment>
<comment type="PTM">
    <text evidence="1">An intermediate of this reaction is the autophosphorylated ppk in which a phosphate is covalently linked to a histidine residue through a N-P bond.</text>
</comment>
<comment type="similarity">
    <text evidence="1">Belongs to the polyphosphate kinase 1 (PPK1) family.</text>
</comment>
<protein>
    <recommendedName>
        <fullName evidence="1">Polyphosphate kinase</fullName>
        <ecNumber evidence="1">2.7.4.1</ecNumber>
    </recommendedName>
    <alternativeName>
        <fullName evidence="1">ATP-polyphosphate phosphotransferase</fullName>
    </alternativeName>
    <alternativeName>
        <fullName evidence="1">Polyphosphoric acid kinase</fullName>
    </alternativeName>
</protein>
<keyword id="KW-0067">ATP-binding</keyword>
<keyword id="KW-0418">Kinase</keyword>
<keyword id="KW-0460">Magnesium</keyword>
<keyword id="KW-0479">Metal-binding</keyword>
<keyword id="KW-0547">Nucleotide-binding</keyword>
<keyword id="KW-0597">Phosphoprotein</keyword>
<keyword id="KW-0677">Repeat</keyword>
<keyword id="KW-0808">Transferase</keyword>
<accession>Q9ZM10</accession>
<dbReference type="EC" id="2.7.4.1" evidence="1"/>
<dbReference type="EMBL" id="AE001439">
    <property type="protein sequence ID" value="AAD05991.1"/>
    <property type="molecule type" value="Genomic_DNA"/>
</dbReference>
<dbReference type="PIR" id="F71935">
    <property type="entry name" value="F71935"/>
</dbReference>
<dbReference type="RefSeq" id="WP_001078656.1">
    <property type="nucleotide sequence ID" value="NC_000921.1"/>
</dbReference>
<dbReference type="SMR" id="Q9ZM10"/>
<dbReference type="KEGG" id="hpj:jhp_0413"/>
<dbReference type="PATRIC" id="fig|85963.30.peg.596"/>
<dbReference type="eggNOG" id="COG0855">
    <property type="taxonomic scope" value="Bacteria"/>
</dbReference>
<dbReference type="Proteomes" id="UP000000804">
    <property type="component" value="Chromosome"/>
</dbReference>
<dbReference type="GO" id="GO:0009358">
    <property type="term" value="C:polyphosphate kinase complex"/>
    <property type="evidence" value="ECO:0007669"/>
    <property type="project" value="InterPro"/>
</dbReference>
<dbReference type="GO" id="GO:0005524">
    <property type="term" value="F:ATP binding"/>
    <property type="evidence" value="ECO:0007669"/>
    <property type="project" value="UniProtKB-KW"/>
</dbReference>
<dbReference type="GO" id="GO:0046872">
    <property type="term" value="F:metal ion binding"/>
    <property type="evidence" value="ECO:0007669"/>
    <property type="project" value="UniProtKB-KW"/>
</dbReference>
<dbReference type="GO" id="GO:0008976">
    <property type="term" value="F:polyphosphate kinase activity"/>
    <property type="evidence" value="ECO:0007669"/>
    <property type="project" value="UniProtKB-UniRule"/>
</dbReference>
<dbReference type="GO" id="GO:0006799">
    <property type="term" value="P:polyphosphate biosynthetic process"/>
    <property type="evidence" value="ECO:0007669"/>
    <property type="project" value="UniProtKB-UniRule"/>
</dbReference>
<dbReference type="CDD" id="cd09165">
    <property type="entry name" value="PLDc_PaPPK1_C1_like"/>
    <property type="match status" value="1"/>
</dbReference>
<dbReference type="CDD" id="cd09168">
    <property type="entry name" value="PLDc_PaPPK1_C2_like"/>
    <property type="match status" value="1"/>
</dbReference>
<dbReference type="Gene3D" id="3.30.870.10">
    <property type="entry name" value="Endonuclease Chain A"/>
    <property type="match status" value="2"/>
</dbReference>
<dbReference type="Gene3D" id="3.30.1840.10">
    <property type="entry name" value="Polyphosphate kinase middle domain"/>
    <property type="match status" value="1"/>
</dbReference>
<dbReference type="Gene3D" id="1.20.58.310">
    <property type="entry name" value="Polyphosphate kinase N-terminal domain"/>
    <property type="match status" value="1"/>
</dbReference>
<dbReference type="HAMAP" id="MF_00347">
    <property type="entry name" value="Polyphosphate_kinase"/>
    <property type="match status" value="1"/>
</dbReference>
<dbReference type="InterPro" id="IPR003414">
    <property type="entry name" value="PP_kinase"/>
</dbReference>
<dbReference type="InterPro" id="IPR041108">
    <property type="entry name" value="PP_kinase_C_1"/>
</dbReference>
<dbReference type="InterPro" id="IPR024953">
    <property type="entry name" value="PP_kinase_middle"/>
</dbReference>
<dbReference type="InterPro" id="IPR036830">
    <property type="entry name" value="PP_kinase_middle_dom_sf"/>
</dbReference>
<dbReference type="InterPro" id="IPR025200">
    <property type="entry name" value="PPK_C_dom2"/>
</dbReference>
<dbReference type="InterPro" id="IPR025198">
    <property type="entry name" value="PPK_N_dom"/>
</dbReference>
<dbReference type="InterPro" id="IPR036832">
    <property type="entry name" value="PPK_N_dom_sf"/>
</dbReference>
<dbReference type="NCBIfam" id="TIGR03705">
    <property type="entry name" value="poly_P_kin"/>
    <property type="match status" value="1"/>
</dbReference>
<dbReference type="NCBIfam" id="NF003921">
    <property type="entry name" value="PRK05443.2-2"/>
    <property type="match status" value="1"/>
</dbReference>
<dbReference type="NCBIfam" id="NF003926">
    <property type="entry name" value="PRK05443.3-4"/>
    <property type="match status" value="1"/>
</dbReference>
<dbReference type="PANTHER" id="PTHR30218">
    <property type="entry name" value="POLYPHOSPHATE KINASE"/>
    <property type="match status" value="1"/>
</dbReference>
<dbReference type="PANTHER" id="PTHR30218:SF0">
    <property type="entry name" value="POLYPHOSPHATE KINASE"/>
    <property type="match status" value="1"/>
</dbReference>
<dbReference type="Pfam" id="PF02503">
    <property type="entry name" value="PP_kinase"/>
    <property type="match status" value="1"/>
</dbReference>
<dbReference type="Pfam" id="PF13090">
    <property type="entry name" value="PP_kinase_C"/>
    <property type="match status" value="1"/>
</dbReference>
<dbReference type="Pfam" id="PF17941">
    <property type="entry name" value="PP_kinase_C_1"/>
    <property type="match status" value="1"/>
</dbReference>
<dbReference type="Pfam" id="PF13089">
    <property type="entry name" value="PP_kinase_N"/>
    <property type="match status" value="1"/>
</dbReference>
<dbReference type="PIRSF" id="PIRSF015589">
    <property type="entry name" value="PP_kinase"/>
    <property type="match status" value="1"/>
</dbReference>
<dbReference type="SUPFAM" id="SSF56024">
    <property type="entry name" value="Phospholipase D/nuclease"/>
    <property type="match status" value="2"/>
</dbReference>
<dbReference type="SUPFAM" id="SSF143724">
    <property type="entry name" value="PHP14-like"/>
    <property type="match status" value="1"/>
</dbReference>
<dbReference type="SUPFAM" id="SSF140356">
    <property type="entry name" value="PPK N-terminal domain-like"/>
    <property type="match status" value="1"/>
</dbReference>